<comment type="function">
    <text evidence="1">Plays a role for multiplication of the virus in different cell types.</text>
</comment>
<comment type="similarity">
    <text evidence="3">Belongs to the poxviridae C7 protein family.</text>
</comment>
<gene>
    <name type="ordered locus">LSDV067</name>
</gene>
<sequence length="198" mass="23163">MGIRHELDILLVSENLALKNVELLKGDSYGCTINIKVNQQKKLDFIIILRPDWTEVRNVKKINMVCNGVVIDTTLIKKSFYEEVYSSSVTVFQNTTVEFFSDTSKKYKEEYPIVNINTIKRYYEIKDSRMTCINFESPISDYDQVNYLKDYINISDDYYLYDACDDCIISSDDDDDNDNADDDEEDDDEVNDIEDDYE</sequence>
<name>VHR2_LSDV</name>
<feature type="chain" id="PRO_0000099394" description="Probable host range protein 2">
    <location>
        <begin position="1"/>
        <end position="198"/>
    </location>
</feature>
<feature type="region of interest" description="Disordered" evidence="2">
    <location>
        <begin position="171"/>
        <end position="198"/>
    </location>
</feature>
<dbReference type="EMBL" id="AF325528">
    <property type="protein sequence ID" value="AAK85028.1"/>
    <property type="molecule type" value="Genomic_DNA"/>
</dbReference>
<dbReference type="RefSeq" id="NP_150501.1">
    <property type="nucleotide sequence ID" value="NC_003027.1"/>
</dbReference>
<dbReference type="SMR" id="Q91MU3"/>
<dbReference type="GeneID" id="921587"/>
<dbReference type="KEGG" id="vg:921587"/>
<dbReference type="OrthoDB" id="13913at10239"/>
<dbReference type="Proteomes" id="UP000127252">
    <property type="component" value="Genome"/>
</dbReference>
<dbReference type="GO" id="GO:0016032">
    <property type="term" value="P:viral process"/>
    <property type="evidence" value="ECO:0007669"/>
    <property type="project" value="InterPro"/>
</dbReference>
<dbReference type="InterPro" id="IPR004967">
    <property type="entry name" value="Poxvirus_C7/F8A"/>
</dbReference>
<dbReference type="Pfam" id="PF03287">
    <property type="entry name" value="Pox_C7_F8A"/>
    <property type="match status" value="1"/>
</dbReference>
<dbReference type="PIRSF" id="PIRSF003779">
    <property type="entry name" value="VAC_C7L"/>
    <property type="match status" value="1"/>
</dbReference>
<proteinExistence type="inferred from homology"/>
<protein>
    <recommendedName>
        <fullName>Probable host range protein 2</fullName>
    </recommendedName>
</protein>
<organismHost>
    <name type="scientific">Bos taurus</name>
    <name type="common">Bovine</name>
    <dbReference type="NCBI Taxonomy" id="9913"/>
</organismHost>
<organism>
    <name type="scientific">Lumpy skin disease virus</name>
    <name type="common">LSDV</name>
    <dbReference type="NCBI Taxonomy" id="59509"/>
    <lineage>
        <taxon>Viruses</taxon>
        <taxon>Varidnaviria</taxon>
        <taxon>Bamfordvirae</taxon>
        <taxon>Nucleocytoviricota</taxon>
        <taxon>Pokkesviricetes</taxon>
        <taxon>Chitovirales</taxon>
        <taxon>Poxviridae</taxon>
        <taxon>Chordopoxvirinae</taxon>
        <taxon>Capripoxvirus</taxon>
    </lineage>
</organism>
<accession>Q91MU3</accession>
<reference key="1">
    <citation type="journal article" date="2001" name="J. Virol.">
        <title>Genome of lumpy skin disease virus.</title>
        <authorList>
            <person name="Tulman E.R."/>
            <person name="Afonso C.L."/>
            <person name="Lu Z."/>
            <person name="Zsak L."/>
            <person name="Kutish G.F."/>
            <person name="Rock D.L."/>
        </authorList>
    </citation>
    <scope>NUCLEOTIDE SEQUENCE [GENOMIC DNA]</scope>
    <source>
        <strain>Isolate Neethling 2490</strain>
    </source>
</reference>
<evidence type="ECO:0000250" key="1"/>
<evidence type="ECO:0000256" key="2">
    <source>
        <dbReference type="SAM" id="MobiDB-lite"/>
    </source>
</evidence>
<evidence type="ECO:0000305" key="3"/>